<evidence type="ECO:0000255" key="1">
    <source>
        <dbReference type="HAMAP-Rule" id="MF_00580"/>
    </source>
</evidence>
<proteinExistence type="inferred from homology"/>
<name>CH10_BREBN</name>
<organism>
    <name type="scientific">Brevibacillus brevis (strain 47 / JCM 6285 / NBRC 100599)</name>
    <dbReference type="NCBI Taxonomy" id="358681"/>
    <lineage>
        <taxon>Bacteria</taxon>
        <taxon>Bacillati</taxon>
        <taxon>Bacillota</taxon>
        <taxon>Bacilli</taxon>
        <taxon>Bacillales</taxon>
        <taxon>Paenibacillaceae</taxon>
        <taxon>Brevibacillus</taxon>
    </lineage>
</organism>
<sequence length="94" mass="10097">MLKPLGDRVVIEAISKDETTASGIVLPDSAKEKPQEGRVIAVGSGRVADNGERIALEVKEGDKVIFSKYAGTEVKVDNNEYLVLRESDILAIIG</sequence>
<reference key="1">
    <citation type="submission" date="2005-03" db="EMBL/GenBank/DDBJ databases">
        <title>Brevibacillus brevis strain 47, complete genome.</title>
        <authorList>
            <person name="Hosoyama A."/>
            <person name="Yamada R."/>
            <person name="Hongo Y."/>
            <person name="Terui Y."/>
            <person name="Ankai A."/>
            <person name="Masuyama W."/>
            <person name="Sekiguchi M."/>
            <person name="Takeda T."/>
            <person name="Asano K."/>
            <person name="Ohji S."/>
            <person name="Ichikawa N."/>
            <person name="Narita S."/>
            <person name="Aoki N."/>
            <person name="Miura H."/>
            <person name="Matsushita S."/>
            <person name="Sekigawa T."/>
            <person name="Yamagata H."/>
            <person name="Yoshikawa H."/>
            <person name="Udaka S."/>
            <person name="Tanikawa S."/>
            <person name="Fujita N."/>
        </authorList>
    </citation>
    <scope>NUCLEOTIDE SEQUENCE [LARGE SCALE GENOMIC DNA]</scope>
    <source>
        <strain>47 / JCM 6285 / NBRC 100599</strain>
    </source>
</reference>
<comment type="function">
    <text evidence="1">Together with the chaperonin GroEL, plays an essential role in assisting protein folding. The GroEL-GroES system forms a nano-cage that allows encapsulation of the non-native substrate proteins and provides a physical environment optimized to promote and accelerate protein folding. GroES binds to the apical surface of the GroEL ring, thereby capping the opening of the GroEL channel.</text>
</comment>
<comment type="subunit">
    <text evidence="1">Heptamer of 7 subunits arranged in a ring. Interacts with the chaperonin GroEL.</text>
</comment>
<comment type="subcellular location">
    <subcellularLocation>
        <location evidence="1">Cytoplasm</location>
    </subcellularLocation>
</comment>
<comment type="similarity">
    <text evidence="1">Belongs to the GroES chaperonin family.</text>
</comment>
<protein>
    <recommendedName>
        <fullName evidence="1">Co-chaperonin GroES</fullName>
    </recommendedName>
    <alternativeName>
        <fullName evidence="1">10 kDa chaperonin</fullName>
    </alternativeName>
    <alternativeName>
        <fullName evidence="1">Chaperonin-10</fullName>
        <shortName evidence="1">Cpn10</shortName>
    </alternativeName>
</protein>
<keyword id="KW-0143">Chaperone</keyword>
<keyword id="KW-0963">Cytoplasm</keyword>
<keyword id="KW-1185">Reference proteome</keyword>
<gene>
    <name evidence="1" type="primary">groES</name>
    <name evidence="1" type="synonym">groS</name>
    <name type="ordered locus">BBR47_05250</name>
</gene>
<accession>C0ZK51</accession>
<dbReference type="EMBL" id="AP008955">
    <property type="protein sequence ID" value="BAH41502.1"/>
    <property type="molecule type" value="Genomic_DNA"/>
</dbReference>
<dbReference type="RefSeq" id="WP_012684268.1">
    <property type="nucleotide sequence ID" value="NC_012491.1"/>
</dbReference>
<dbReference type="SMR" id="C0ZK51"/>
<dbReference type="STRING" id="358681.BBR47_05250"/>
<dbReference type="KEGG" id="bbe:BBR47_05250"/>
<dbReference type="eggNOG" id="COG0234">
    <property type="taxonomic scope" value="Bacteria"/>
</dbReference>
<dbReference type="HOGENOM" id="CLU_132825_2_0_9"/>
<dbReference type="Proteomes" id="UP000001877">
    <property type="component" value="Chromosome"/>
</dbReference>
<dbReference type="GO" id="GO:0005737">
    <property type="term" value="C:cytoplasm"/>
    <property type="evidence" value="ECO:0007669"/>
    <property type="project" value="UniProtKB-SubCell"/>
</dbReference>
<dbReference type="GO" id="GO:0005524">
    <property type="term" value="F:ATP binding"/>
    <property type="evidence" value="ECO:0007669"/>
    <property type="project" value="InterPro"/>
</dbReference>
<dbReference type="GO" id="GO:0046872">
    <property type="term" value="F:metal ion binding"/>
    <property type="evidence" value="ECO:0007669"/>
    <property type="project" value="TreeGrafter"/>
</dbReference>
<dbReference type="GO" id="GO:0044183">
    <property type="term" value="F:protein folding chaperone"/>
    <property type="evidence" value="ECO:0007669"/>
    <property type="project" value="InterPro"/>
</dbReference>
<dbReference type="GO" id="GO:0051087">
    <property type="term" value="F:protein-folding chaperone binding"/>
    <property type="evidence" value="ECO:0007669"/>
    <property type="project" value="TreeGrafter"/>
</dbReference>
<dbReference type="GO" id="GO:0051082">
    <property type="term" value="F:unfolded protein binding"/>
    <property type="evidence" value="ECO:0007669"/>
    <property type="project" value="TreeGrafter"/>
</dbReference>
<dbReference type="GO" id="GO:0051085">
    <property type="term" value="P:chaperone cofactor-dependent protein refolding"/>
    <property type="evidence" value="ECO:0007669"/>
    <property type="project" value="TreeGrafter"/>
</dbReference>
<dbReference type="CDD" id="cd00320">
    <property type="entry name" value="cpn10"/>
    <property type="match status" value="1"/>
</dbReference>
<dbReference type="FunFam" id="2.30.33.40:FF:000001">
    <property type="entry name" value="10 kDa chaperonin"/>
    <property type="match status" value="1"/>
</dbReference>
<dbReference type="Gene3D" id="2.30.33.40">
    <property type="entry name" value="GroES chaperonin"/>
    <property type="match status" value="1"/>
</dbReference>
<dbReference type="HAMAP" id="MF_00580">
    <property type="entry name" value="CH10"/>
    <property type="match status" value="1"/>
</dbReference>
<dbReference type="InterPro" id="IPR020818">
    <property type="entry name" value="Chaperonin_GroES"/>
</dbReference>
<dbReference type="InterPro" id="IPR037124">
    <property type="entry name" value="Chaperonin_GroES_sf"/>
</dbReference>
<dbReference type="InterPro" id="IPR018369">
    <property type="entry name" value="Chaprnonin_Cpn10_CS"/>
</dbReference>
<dbReference type="InterPro" id="IPR011032">
    <property type="entry name" value="GroES-like_sf"/>
</dbReference>
<dbReference type="NCBIfam" id="NF001527">
    <property type="entry name" value="PRK00364.1-2"/>
    <property type="match status" value="1"/>
</dbReference>
<dbReference type="NCBIfam" id="NF001530">
    <property type="entry name" value="PRK00364.1-6"/>
    <property type="match status" value="1"/>
</dbReference>
<dbReference type="NCBIfam" id="NF001531">
    <property type="entry name" value="PRK00364.2-2"/>
    <property type="match status" value="1"/>
</dbReference>
<dbReference type="NCBIfam" id="NF001532">
    <property type="entry name" value="PRK00364.2-3"/>
    <property type="match status" value="1"/>
</dbReference>
<dbReference type="NCBIfam" id="NF001533">
    <property type="entry name" value="PRK00364.2-4"/>
    <property type="match status" value="1"/>
</dbReference>
<dbReference type="NCBIfam" id="NF001534">
    <property type="entry name" value="PRK00364.2-5"/>
    <property type="match status" value="1"/>
</dbReference>
<dbReference type="PANTHER" id="PTHR10772">
    <property type="entry name" value="10 KDA HEAT SHOCK PROTEIN"/>
    <property type="match status" value="1"/>
</dbReference>
<dbReference type="PANTHER" id="PTHR10772:SF58">
    <property type="entry name" value="CO-CHAPERONIN GROES"/>
    <property type="match status" value="1"/>
</dbReference>
<dbReference type="Pfam" id="PF00166">
    <property type="entry name" value="Cpn10"/>
    <property type="match status" value="1"/>
</dbReference>
<dbReference type="PRINTS" id="PR00297">
    <property type="entry name" value="CHAPERONIN10"/>
</dbReference>
<dbReference type="SMART" id="SM00883">
    <property type="entry name" value="Cpn10"/>
    <property type="match status" value="1"/>
</dbReference>
<dbReference type="SUPFAM" id="SSF50129">
    <property type="entry name" value="GroES-like"/>
    <property type="match status" value="1"/>
</dbReference>
<dbReference type="PROSITE" id="PS00681">
    <property type="entry name" value="CHAPERONINS_CPN10"/>
    <property type="match status" value="1"/>
</dbReference>
<feature type="chain" id="PRO_1000146890" description="Co-chaperonin GroES">
    <location>
        <begin position="1"/>
        <end position="94"/>
    </location>
</feature>